<reference key="1">
    <citation type="submission" date="2006-08" db="EMBL/GenBank/DDBJ databases">
        <title>Complete sequence of Shewanella frigidimarina NCIMB 400.</title>
        <authorList>
            <consortium name="US DOE Joint Genome Institute"/>
            <person name="Copeland A."/>
            <person name="Lucas S."/>
            <person name="Lapidus A."/>
            <person name="Barry K."/>
            <person name="Detter J.C."/>
            <person name="Glavina del Rio T."/>
            <person name="Hammon N."/>
            <person name="Israni S."/>
            <person name="Dalin E."/>
            <person name="Tice H."/>
            <person name="Pitluck S."/>
            <person name="Fredrickson J.K."/>
            <person name="Kolker E."/>
            <person name="McCuel L.A."/>
            <person name="DiChristina T."/>
            <person name="Nealson K.H."/>
            <person name="Newman D."/>
            <person name="Tiedje J.M."/>
            <person name="Zhou J."/>
            <person name="Romine M.F."/>
            <person name="Culley D.E."/>
            <person name="Serres M."/>
            <person name="Chertkov O."/>
            <person name="Brettin T."/>
            <person name="Bruce D."/>
            <person name="Han C."/>
            <person name="Tapia R."/>
            <person name="Gilna P."/>
            <person name="Schmutz J."/>
            <person name="Larimer F."/>
            <person name="Land M."/>
            <person name="Hauser L."/>
            <person name="Kyrpides N."/>
            <person name="Mikhailova N."/>
            <person name="Richardson P."/>
        </authorList>
    </citation>
    <scope>NUCLEOTIDE SEQUENCE [LARGE SCALE GENOMIC DNA]</scope>
    <source>
        <strain>NCIMB 400</strain>
    </source>
</reference>
<gene>
    <name evidence="1" type="primary">coaD</name>
    <name type="ordered locus">Sfri_3926</name>
</gene>
<sequence>MHRRAIYPGTFDPVTNGHADLIERAARLFKHVIIGIASNPSKQPRFSLEERVAQVNLVTAHLKNVEVVGFTGLLVDFAKEQHASVLIRGLRAVSDFEYEFQLANMNRRLSPDLESVFLTPAEENSFISSTLVKEVALHGGDVSQFVHPQIAAALKLKVAQIQLDKEGK</sequence>
<keyword id="KW-0067">ATP-binding</keyword>
<keyword id="KW-0173">Coenzyme A biosynthesis</keyword>
<keyword id="KW-0963">Cytoplasm</keyword>
<keyword id="KW-0460">Magnesium</keyword>
<keyword id="KW-0547">Nucleotide-binding</keyword>
<keyword id="KW-0548">Nucleotidyltransferase</keyword>
<keyword id="KW-1185">Reference proteome</keyword>
<keyword id="KW-0808">Transferase</keyword>
<protein>
    <recommendedName>
        <fullName evidence="1">Phosphopantetheine adenylyltransferase</fullName>
        <ecNumber evidence="1">2.7.7.3</ecNumber>
    </recommendedName>
    <alternativeName>
        <fullName evidence="1">Dephospho-CoA pyrophosphorylase</fullName>
    </alternativeName>
    <alternativeName>
        <fullName evidence="1">Pantetheine-phosphate adenylyltransferase</fullName>
        <shortName evidence="1">PPAT</shortName>
    </alternativeName>
</protein>
<dbReference type="EC" id="2.7.7.3" evidence="1"/>
<dbReference type="EMBL" id="CP000447">
    <property type="protein sequence ID" value="ABI73751.1"/>
    <property type="molecule type" value="Genomic_DNA"/>
</dbReference>
<dbReference type="RefSeq" id="WP_011639335.1">
    <property type="nucleotide sequence ID" value="NC_008345.1"/>
</dbReference>
<dbReference type="SMR" id="Q07W63"/>
<dbReference type="STRING" id="318167.Sfri_3926"/>
<dbReference type="KEGG" id="sfr:Sfri_3926"/>
<dbReference type="eggNOG" id="COG0669">
    <property type="taxonomic scope" value="Bacteria"/>
</dbReference>
<dbReference type="HOGENOM" id="CLU_100149_0_1_6"/>
<dbReference type="OrthoDB" id="9806661at2"/>
<dbReference type="UniPathway" id="UPA00241">
    <property type="reaction ID" value="UER00355"/>
</dbReference>
<dbReference type="Proteomes" id="UP000000684">
    <property type="component" value="Chromosome"/>
</dbReference>
<dbReference type="GO" id="GO:0005737">
    <property type="term" value="C:cytoplasm"/>
    <property type="evidence" value="ECO:0007669"/>
    <property type="project" value="UniProtKB-SubCell"/>
</dbReference>
<dbReference type="GO" id="GO:0005524">
    <property type="term" value="F:ATP binding"/>
    <property type="evidence" value="ECO:0007669"/>
    <property type="project" value="UniProtKB-KW"/>
</dbReference>
<dbReference type="GO" id="GO:0004595">
    <property type="term" value="F:pantetheine-phosphate adenylyltransferase activity"/>
    <property type="evidence" value="ECO:0007669"/>
    <property type="project" value="UniProtKB-UniRule"/>
</dbReference>
<dbReference type="GO" id="GO:0015937">
    <property type="term" value="P:coenzyme A biosynthetic process"/>
    <property type="evidence" value="ECO:0007669"/>
    <property type="project" value="UniProtKB-UniRule"/>
</dbReference>
<dbReference type="CDD" id="cd02163">
    <property type="entry name" value="PPAT"/>
    <property type="match status" value="1"/>
</dbReference>
<dbReference type="Gene3D" id="3.40.50.620">
    <property type="entry name" value="HUPs"/>
    <property type="match status" value="1"/>
</dbReference>
<dbReference type="HAMAP" id="MF_00151">
    <property type="entry name" value="PPAT_bact"/>
    <property type="match status" value="1"/>
</dbReference>
<dbReference type="InterPro" id="IPR004821">
    <property type="entry name" value="Cyt_trans-like"/>
</dbReference>
<dbReference type="InterPro" id="IPR001980">
    <property type="entry name" value="PPAT"/>
</dbReference>
<dbReference type="InterPro" id="IPR014729">
    <property type="entry name" value="Rossmann-like_a/b/a_fold"/>
</dbReference>
<dbReference type="NCBIfam" id="TIGR01510">
    <property type="entry name" value="coaD_prev_kdtB"/>
    <property type="match status" value="1"/>
</dbReference>
<dbReference type="NCBIfam" id="TIGR00125">
    <property type="entry name" value="cyt_tran_rel"/>
    <property type="match status" value="1"/>
</dbReference>
<dbReference type="PANTHER" id="PTHR21342">
    <property type="entry name" value="PHOSPHOPANTETHEINE ADENYLYLTRANSFERASE"/>
    <property type="match status" value="1"/>
</dbReference>
<dbReference type="PANTHER" id="PTHR21342:SF1">
    <property type="entry name" value="PHOSPHOPANTETHEINE ADENYLYLTRANSFERASE"/>
    <property type="match status" value="1"/>
</dbReference>
<dbReference type="Pfam" id="PF01467">
    <property type="entry name" value="CTP_transf_like"/>
    <property type="match status" value="1"/>
</dbReference>
<dbReference type="PRINTS" id="PR01020">
    <property type="entry name" value="LPSBIOSNTHSS"/>
</dbReference>
<dbReference type="SUPFAM" id="SSF52374">
    <property type="entry name" value="Nucleotidylyl transferase"/>
    <property type="match status" value="1"/>
</dbReference>
<evidence type="ECO:0000255" key="1">
    <source>
        <dbReference type="HAMAP-Rule" id="MF_00151"/>
    </source>
</evidence>
<feature type="chain" id="PRO_1000011231" description="Phosphopantetheine adenylyltransferase">
    <location>
        <begin position="1"/>
        <end position="168"/>
    </location>
</feature>
<feature type="binding site" evidence="1">
    <location>
        <begin position="10"/>
        <end position="11"/>
    </location>
    <ligand>
        <name>ATP</name>
        <dbReference type="ChEBI" id="CHEBI:30616"/>
    </ligand>
</feature>
<feature type="binding site" evidence="1">
    <location>
        <position position="10"/>
    </location>
    <ligand>
        <name>substrate</name>
    </ligand>
</feature>
<feature type="binding site" evidence="1">
    <location>
        <position position="18"/>
    </location>
    <ligand>
        <name>ATP</name>
        <dbReference type="ChEBI" id="CHEBI:30616"/>
    </ligand>
</feature>
<feature type="binding site" evidence="1">
    <location>
        <position position="42"/>
    </location>
    <ligand>
        <name>substrate</name>
    </ligand>
</feature>
<feature type="binding site" evidence="1">
    <location>
        <position position="74"/>
    </location>
    <ligand>
        <name>substrate</name>
    </ligand>
</feature>
<feature type="binding site" evidence="1">
    <location>
        <position position="88"/>
    </location>
    <ligand>
        <name>substrate</name>
    </ligand>
</feature>
<feature type="binding site" evidence="1">
    <location>
        <begin position="89"/>
        <end position="91"/>
    </location>
    <ligand>
        <name>ATP</name>
        <dbReference type="ChEBI" id="CHEBI:30616"/>
    </ligand>
</feature>
<feature type="binding site" evidence="1">
    <location>
        <position position="99"/>
    </location>
    <ligand>
        <name>ATP</name>
        <dbReference type="ChEBI" id="CHEBI:30616"/>
    </ligand>
</feature>
<feature type="binding site" evidence="1">
    <location>
        <begin position="124"/>
        <end position="130"/>
    </location>
    <ligand>
        <name>ATP</name>
        <dbReference type="ChEBI" id="CHEBI:30616"/>
    </ligand>
</feature>
<feature type="site" description="Transition state stabilizer" evidence="1">
    <location>
        <position position="18"/>
    </location>
</feature>
<accession>Q07W63</accession>
<proteinExistence type="inferred from homology"/>
<comment type="function">
    <text evidence="1">Reversibly transfers an adenylyl group from ATP to 4'-phosphopantetheine, yielding dephospho-CoA (dPCoA) and pyrophosphate.</text>
</comment>
<comment type="catalytic activity">
    <reaction evidence="1">
        <text>(R)-4'-phosphopantetheine + ATP + H(+) = 3'-dephospho-CoA + diphosphate</text>
        <dbReference type="Rhea" id="RHEA:19801"/>
        <dbReference type="ChEBI" id="CHEBI:15378"/>
        <dbReference type="ChEBI" id="CHEBI:30616"/>
        <dbReference type="ChEBI" id="CHEBI:33019"/>
        <dbReference type="ChEBI" id="CHEBI:57328"/>
        <dbReference type="ChEBI" id="CHEBI:61723"/>
        <dbReference type="EC" id="2.7.7.3"/>
    </reaction>
</comment>
<comment type="cofactor">
    <cofactor evidence="1">
        <name>Mg(2+)</name>
        <dbReference type="ChEBI" id="CHEBI:18420"/>
    </cofactor>
</comment>
<comment type="pathway">
    <text evidence="1">Cofactor biosynthesis; coenzyme A biosynthesis; CoA from (R)-pantothenate: step 4/5.</text>
</comment>
<comment type="subunit">
    <text evidence="1">Homohexamer.</text>
</comment>
<comment type="subcellular location">
    <subcellularLocation>
        <location evidence="1">Cytoplasm</location>
    </subcellularLocation>
</comment>
<comment type="similarity">
    <text evidence="1">Belongs to the bacterial CoaD family.</text>
</comment>
<organism>
    <name type="scientific">Shewanella frigidimarina (strain NCIMB 400)</name>
    <dbReference type="NCBI Taxonomy" id="318167"/>
    <lineage>
        <taxon>Bacteria</taxon>
        <taxon>Pseudomonadati</taxon>
        <taxon>Pseudomonadota</taxon>
        <taxon>Gammaproteobacteria</taxon>
        <taxon>Alteromonadales</taxon>
        <taxon>Shewanellaceae</taxon>
        <taxon>Shewanella</taxon>
    </lineage>
</organism>
<name>COAD_SHEFN</name>